<feature type="chain" id="PRO_0000081156" description="Anaerobic nitric oxide reductase transcription regulator NorR">
    <location>
        <begin position="1"/>
        <end position="506"/>
    </location>
</feature>
<feature type="domain" description="Sigma-54 factor interaction" evidence="1">
    <location>
        <begin position="187"/>
        <end position="416"/>
    </location>
</feature>
<feature type="DNA-binding region" description="H-T-H motif" evidence="1">
    <location>
        <begin position="481"/>
        <end position="500"/>
    </location>
</feature>
<feature type="binding site" evidence="1">
    <location>
        <begin position="215"/>
        <end position="222"/>
    </location>
    <ligand>
        <name>ATP</name>
        <dbReference type="ChEBI" id="CHEBI:30616"/>
    </ligand>
</feature>
<feature type="binding site" evidence="1">
    <location>
        <begin position="278"/>
        <end position="287"/>
    </location>
    <ligand>
        <name>ATP</name>
        <dbReference type="ChEBI" id="CHEBI:30616"/>
    </ligand>
</feature>
<feature type="modified residue" description="4-aspartylphosphate" evidence="1">
    <location>
        <position position="57"/>
    </location>
</feature>
<name>NORR_SALTI</name>
<dbReference type="EMBL" id="AL513382">
    <property type="protein sequence ID" value="CAD05946.1"/>
    <property type="molecule type" value="Genomic_DNA"/>
</dbReference>
<dbReference type="EMBL" id="AE014613">
    <property type="protein sequence ID" value="AAO70302.1"/>
    <property type="molecule type" value="Genomic_DNA"/>
</dbReference>
<dbReference type="RefSeq" id="NP_457233.1">
    <property type="nucleotide sequence ID" value="NC_003198.1"/>
</dbReference>
<dbReference type="RefSeq" id="WP_000010816.1">
    <property type="nucleotide sequence ID" value="NZ_WSUR01000005.1"/>
</dbReference>
<dbReference type="SMR" id="Q8Z4C6"/>
<dbReference type="STRING" id="220341.gene:17586856"/>
<dbReference type="KEGG" id="stt:t2741"/>
<dbReference type="KEGG" id="sty:STY2961"/>
<dbReference type="PATRIC" id="fig|220341.7.peg.3015"/>
<dbReference type="eggNOG" id="COG3604">
    <property type="taxonomic scope" value="Bacteria"/>
</dbReference>
<dbReference type="HOGENOM" id="CLU_000445_125_2_6"/>
<dbReference type="OMA" id="LRYEAHQ"/>
<dbReference type="OrthoDB" id="9804019at2"/>
<dbReference type="UniPathway" id="UPA00638"/>
<dbReference type="Proteomes" id="UP000000541">
    <property type="component" value="Chromosome"/>
</dbReference>
<dbReference type="Proteomes" id="UP000002670">
    <property type="component" value="Chromosome"/>
</dbReference>
<dbReference type="GO" id="GO:0005524">
    <property type="term" value="F:ATP binding"/>
    <property type="evidence" value="ECO:0007669"/>
    <property type="project" value="UniProtKB-UniRule"/>
</dbReference>
<dbReference type="GO" id="GO:0016887">
    <property type="term" value="F:ATP hydrolysis activity"/>
    <property type="evidence" value="ECO:0007669"/>
    <property type="project" value="InterPro"/>
</dbReference>
<dbReference type="GO" id="GO:0003677">
    <property type="term" value="F:DNA binding"/>
    <property type="evidence" value="ECO:0007669"/>
    <property type="project" value="UniProtKB-KW"/>
</dbReference>
<dbReference type="GO" id="GO:0003700">
    <property type="term" value="F:DNA-binding transcription factor activity"/>
    <property type="evidence" value="ECO:0007669"/>
    <property type="project" value="UniProtKB-UniRule"/>
</dbReference>
<dbReference type="GO" id="GO:0000160">
    <property type="term" value="P:phosphorelay signal transduction system"/>
    <property type="evidence" value="ECO:0007669"/>
    <property type="project" value="UniProtKB-UniRule"/>
</dbReference>
<dbReference type="CDD" id="cd00009">
    <property type="entry name" value="AAA"/>
    <property type="match status" value="1"/>
</dbReference>
<dbReference type="FunFam" id="1.10.8.60:FF:000045">
    <property type="entry name" value="Anaerobic nitric oxide reductase transcription regulator NorR"/>
    <property type="match status" value="1"/>
</dbReference>
<dbReference type="FunFam" id="3.30.450.40:FF:000021">
    <property type="entry name" value="Anaerobic nitric oxide reductase transcription regulator NorR"/>
    <property type="match status" value="1"/>
</dbReference>
<dbReference type="FunFam" id="3.40.50.300:FF:000006">
    <property type="entry name" value="DNA-binding transcriptional regulator NtrC"/>
    <property type="match status" value="1"/>
</dbReference>
<dbReference type="Gene3D" id="1.10.8.60">
    <property type="match status" value="1"/>
</dbReference>
<dbReference type="Gene3D" id="3.30.450.40">
    <property type="match status" value="1"/>
</dbReference>
<dbReference type="Gene3D" id="1.10.10.60">
    <property type="entry name" value="Homeodomain-like"/>
    <property type="match status" value="1"/>
</dbReference>
<dbReference type="Gene3D" id="3.40.50.300">
    <property type="entry name" value="P-loop containing nucleotide triphosphate hydrolases"/>
    <property type="match status" value="1"/>
</dbReference>
<dbReference type="HAMAP" id="MF_01314">
    <property type="entry name" value="NorR"/>
    <property type="match status" value="1"/>
</dbReference>
<dbReference type="InterPro" id="IPR003593">
    <property type="entry name" value="AAA+_ATPase"/>
</dbReference>
<dbReference type="InterPro" id="IPR003018">
    <property type="entry name" value="GAF"/>
</dbReference>
<dbReference type="InterPro" id="IPR029016">
    <property type="entry name" value="GAF-like_dom_sf"/>
</dbReference>
<dbReference type="InterPro" id="IPR009057">
    <property type="entry name" value="Homeodomain-like_sf"/>
</dbReference>
<dbReference type="InterPro" id="IPR023944">
    <property type="entry name" value="NorR"/>
</dbReference>
<dbReference type="InterPro" id="IPR027417">
    <property type="entry name" value="P-loop_NTPase"/>
</dbReference>
<dbReference type="InterPro" id="IPR002078">
    <property type="entry name" value="Sigma_54_int"/>
</dbReference>
<dbReference type="InterPro" id="IPR025662">
    <property type="entry name" value="Sigma_54_int_dom_ATP-bd_1"/>
</dbReference>
<dbReference type="InterPro" id="IPR025943">
    <property type="entry name" value="Sigma_54_int_dom_ATP-bd_2"/>
</dbReference>
<dbReference type="InterPro" id="IPR025944">
    <property type="entry name" value="Sigma_54_int_dom_CS"/>
</dbReference>
<dbReference type="NCBIfam" id="NF003451">
    <property type="entry name" value="PRK05022.1"/>
    <property type="match status" value="1"/>
</dbReference>
<dbReference type="PANTHER" id="PTHR32071:SF35">
    <property type="entry name" value="ANAEROBIC NITRIC OXIDE REDUCTASE TRANSCRIPTION REGULATOR NORR"/>
    <property type="match status" value="1"/>
</dbReference>
<dbReference type="PANTHER" id="PTHR32071">
    <property type="entry name" value="TRANSCRIPTIONAL REGULATORY PROTEIN"/>
    <property type="match status" value="1"/>
</dbReference>
<dbReference type="Pfam" id="PF01590">
    <property type="entry name" value="GAF"/>
    <property type="match status" value="1"/>
</dbReference>
<dbReference type="Pfam" id="PF00158">
    <property type="entry name" value="Sigma54_activat"/>
    <property type="match status" value="1"/>
</dbReference>
<dbReference type="SMART" id="SM00382">
    <property type="entry name" value="AAA"/>
    <property type="match status" value="1"/>
</dbReference>
<dbReference type="SMART" id="SM00065">
    <property type="entry name" value="GAF"/>
    <property type="match status" value="1"/>
</dbReference>
<dbReference type="SUPFAM" id="SSF55781">
    <property type="entry name" value="GAF domain-like"/>
    <property type="match status" value="1"/>
</dbReference>
<dbReference type="SUPFAM" id="SSF46689">
    <property type="entry name" value="Homeodomain-like"/>
    <property type="match status" value="1"/>
</dbReference>
<dbReference type="SUPFAM" id="SSF52540">
    <property type="entry name" value="P-loop containing nucleoside triphosphate hydrolases"/>
    <property type="match status" value="1"/>
</dbReference>
<dbReference type="PROSITE" id="PS00675">
    <property type="entry name" value="SIGMA54_INTERACT_1"/>
    <property type="match status" value="1"/>
</dbReference>
<dbReference type="PROSITE" id="PS00676">
    <property type="entry name" value="SIGMA54_INTERACT_2"/>
    <property type="match status" value="1"/>
</dbReference>
<dbReference type="PROSITE" id="PS00688">
    <property type="entry name" value="SIGMA54_INTERACT_3"/>
    <property type="match status" value="1"/>
</dbReference>
<dbReference type="PROSITE" id="PS50045">
    <property type="entry name" value="SIGMA54_INTERACT_4"/>
    <property type="match status" value="1"/>
</dbReference>
<gene>
    <name evidence="1" type="primary">norR</name>
    <name type="ordered locus">STY2961</name>
    <name type="ordered locus">t2741</name>
</gene>
<sequence>MSFSVEVLAGIAIELQRGIGHQDRFQRLITTLRQVLACDASALLRYESRQFIPLAIDGLAQDVLGRRFTLEGHPRLEAIARAGDVVRFPADSDLPDPYDGLIPGQESLKVHACVGLPLFAGQNLIGALTLDAMTPEQFEVFSDEELRLVAALAAGALSNALLIEQLESQNMLPGSSGVFEPIKETHMIGLSPAMTQLKKEIEIVAGSDLNVLIGGETGTGKELVAKAIHQGSPRAVNPLVYLNCAALPESVAESELFGHVKGAFTGAISNRSGKFEMADNGTLFLDEIGELSLALQAKLLRVLQYGDIQRVGDDRSLRVDVRVLAATNRDLREEVLAGRFRADLFHRLSVFPLFVPPLRERGDDVVLLAGYFCEQCRLRLGLSRVVLSPGARRHLLNYGWPGNVRELEHAIHRAVVLARATRAGDEVVLEEQHFALSEDVLPAPSAESFLALPACRNLRESTENFQREMIRQALAQNNHNWAASARALETDVANLHRLAKRLGLKD</sequence>
<accession>Q8Z4C6</accession>
<evidence type="ECO:0000255" key="1">
    <source>
        <dbReference type="HAMAP-Rule" id="MF_01314"/>
    </source>
</evidence>
<protein>
    <recommendedName>
        <fullName evidence="1">Anaerobic nitric oxide reductase transcription regulator NorR</fullName>
    </recommendedName>
</protein>
<proteinExistence type="inferred from homology"/>
<organism>
    <name type="scientific">Salmonella typhi</name>
    <dbReference type="NCBI Taxonomy" id="90370"/>
    <lineage>
        <taxon>Bacteria</taxon>
        <taxon>Pseudomonadati</taxon>
        <taxon>Pseudomonadota</taxon>
        <taxon>Gammaproteobacteria</taxon>
        <taxon>Enterobacterales</taxon>
        <taxon>Enterobacteriaceae</taxon>
        <taxon>Salmonella</taxon>
    </lineage>
</organism>
<reference key="1">
    <citation type="journal article" date="2001" name="Nature">
        <title>Complete genome sequence of a multiple drug resistant Salmonella enterica serovar Typhi CT18.</title>
        <authorList>
            <person name="Parkhill J."/>
            <person name="Dougan G."/>
            <person name="James K.D."/>
            <person name="Thomson N.R."/>
            <person name="Pickard D."/>
            <person name="Wain J."/>
            <person name="Churcher C.M."/>
            <person name="Mungall K.L."/>
            <person name="Bentley S.D."/>
            <person name="Holden M.T.G."/>
            <person name="Sebaihia M."/>
            <person name="Baker S."/>
            <person name="Basham D."/>
            <person name="Brooks K."/>
            <person name="Chillingworth T."/>
            <person name="Connerton P."/>
            <person name="Cronin A."/>
            <person name="Davis P."/>
            <person name="Davies R.M."/>
            <person name="Dowd L."/>
            <person name="White N."/>
            <person name="Farrar J."/>
            <person name="Feltwell T."/>
            <person name="Hamlin N."/>
            <person name="Haque A."/>
            <person name="Hien T.T."/>
            <person name="Holroyd S."/>
            <person name="Jagels K."/>
            <person name="Krogh A."/>
            <person name="Larsen T.S."/>
            <person name="Leather S."/>
            <person name="Moule S."/>
            <person name="O'Gaora P."/>
            <person name="Parry C."/>
            <person name="Quail M.A."/>
            <person name="Rutherford K.M."/>
            <person name="Simmonds M."/>
            <person name="Skelton J."/>
            <person name="Stevens K."/>
            <person name="Whitehead S."/>
            <person name="Barrell B.G."/>
        </authorList>
    </citation>
    <scope>NUCLEOTIDE SEQUENCE [LARGE SCALE GENOMIC DNA]</scope>
    <source>
        <strain>CT18</strain>
    </source>
</reference>
<reference key="2">
    <citation type="journal article" date="2003" name="J. Bacteriol.">
        <title>Comparative genomics of Salmonella enterica serovar Typhi strains Ty2 and CT18.</title>
        <authorList>
            <person name="Deng W."/>
            <person name="Liou S.-R."/>
            <person name="Plunkett G. III"/>
            <person name="Mayhew G.F."/>
            <person name="Rose D.J."/>
            <person name="Burland V."/>
            <person name="Kodoyianni V."/>
            <person name="Schwartz D.C."/>
            <person name="Blattner F.R."/>
        </authorList>
    </citation>
    <scope>NUCLEOTIDE SEQUENCE [LARGE SCALE GENOMIC DNA]</scope>
    <source>
        <strain>ATCC 700931 / Ty2</strain>
    </source>
</reference>
<comment type="function">
    <text evidence="1">Required for the expression of anaerobic nitric oxide (NO) reductase, acts as a transcriptional activator for at least the norVW operon. Activation also requires sigma-54.</text>
</comment>
<comment type="pathway">
    <text evidence="1">Nitrogen metabolism; nitric oxide reduction.</text>
</comment>
<keyword id="KW-0067">ATP-binding</keyword>
<keyword id="KW-0238">DNA-binding</keyword>
<keyword id="KW-0547">Nucleotide-binding</keyword>
<keyword id="KW-0597">Phosphoprotein</keyword>
<keyword id="KW-0804">Transcription</keyword>
<keyword id="KW-0805">Transcription regulation</keyword>